<evidence type="ECO:0000255" key="1">
    <source>
        <dbReference type="HAMAP-Rule" id="MF_00212"/>
    </source>
</evidence>
<keyword id="KW-0274">FAD</keyword>
<keyword id="KW-0285">Flavoprotein</keyword>
<keyword id="KW-0560">Oxidoreductase</keyword>
<keyword id="KW-1185">Reference proteome</keyword>
<keyword id="KW-0816">Tricarboxylic acid cycle</keyword>
<reference key="1">
    <citation type="journal article" date="2003" name="Nucleic Acids Res.">
        <title>The complete genome sequence and analysis of Corynebacterium diphtheriae NCTC13129.</title>
        <authorList>
            <person name="Cerdeno-Tarraga A.-M."/>
            <person name="Efstratiou A."/>
            <person name="Dover L.G."/>
            <person name="Holden M.T.G."/>
            <person name="Pallen M.J."/>
            <person name="Bentley S.D."/>
            <person name="Besra G.S."/>
            <person name="Churcher C.M."/>
            <person name="James K.D."/>
            <person name="De Zoysa A."/>
            <person name="Chillingworth T."/>
            <person name="Cronin A."/>
            <person name="Dowd L."/>
            <person name="Feltwell T."/>
            <person name="Hamlin N."/>
            <person name="Holroyd S."/>
            <person name="Jagels K."/>
            <person name="Moule S."/>
            <person name="Quail M.A."/>
            <person name="Rabbinowitsch E."/>
            <person name="Rutherford K.M."/>
            <person name="Thomson N.R."/>
            <person name="Unwin L."/>
            <person name="Whitehead S."/>
            <person name="Barrell B.G."/>
            <person name="Parkhill J."/>
        </authorList>
    </citation>
    <scope>NUCLEOTIDE SEQUENCE [LARGE SCALE GENOMIC DNA]</scope>
    <source>
        <strain>ATCC 700971 / NCTC 13129 / Biotype gravis</strain>
    </source>
</reference>
<accession>Q6NGL9</accession>
<proteinExistence type="inferred from homology"/>
<comment type="catalytic activity">
    <reaction evidence="1">
        <text>(S)-malate + a quinone = a quinol + oxaloacetate</text>
        <dbReference type="Rhea" id="RHEA:46012"/>
        <dbReference type="ChEBI" id="CHEBI:15589"/>
        <dbReference type="ChEBI" id="CHEBI:16452"/>
        <dbReference type="ChEBI" id="CHEBI:24646"/>
        <dbReference type="ChEBI" id="CHEBI:132124"/>
        <dbReference type="EC" id="1.1.5.4"/>
    </reaction>
</comment>
<comment type="cofactor">
    <cofactor evidence="1">
        <name>FAD</name>
        <dbReference type="ChEBI" id="CHEBI:57692"/>
    </cofactor>
</comment>
<comment type="pathway">
    <text evidence="1">Carbohydrate metabolism; tricarboxylic acid cycle; oxaloacetate from (S)-malate (quinone route): step 1/1.</text>
</comment>
<comment type="similarity">
    <text evidence="1">Belongs to the MQO family.</text>
</comment>
<protein>
    <recommendedName>
        <fullName evidence="1">Probable malate:quinone oxidoreductase</fullName>
        <ecNumber evidence="1">1.1.5.4</ecNumber>
    </recommendedName>
    <alternativeName>
        <fullName evidence="1">MQO</fullName>
    </alternativeName>
    <alternativeName>
        <fullName evidence="1">Malate dehydrogenase [quinone]</fullName>
    </alternativeName>
</protein>
<organism>
    <name type="scientific">Corynebacterium diphtheriae (strain ATCC 700971 / NCTC 13129 / Biotype gravis)</name>
    <dbReference type="NCBI Taxonomy" id="257309"/>
    <lineage>
        <taxon>Bacteria</taxon>
        <taxon>Bacillati</taxon>
        <taxon>Actinomycetota</taxon>
        <taxon>Actinomycetes</taxon>
        <taxon>Mycobacteriales</taxon>
        <taxon>Corynebacteriaceae</taxon>
        <taxon>Corynebacterium</taxon>
    </lineage>
</organism>
<feature type="chain" id="PRO_0000325493" description="Probable malate:quinone oxidoreductase">
    <location>
        <begin position="1"/>
        <end position="499"/>
    </location>
</feature>
<name>MQO_CORDI</name>
<sequence>MADSTTAQHVTDEVDVALIGAGIMSATLGAMLRTLEPGWTQVMFERLDAPAQESSSPWNNAGTGHSALCELNYTPEVKGRVQIDKALGVNEKFQISRQFWSYQVNEGVLPSPREWINPVPHVSFGRGEDQVAYLKKRYEALAAHPLFPNMQYTDDRAKFAEMLPLMADGRSEFEKVAISWTDAGTDINYGSQTRQFLKAAEKNGTEIRYGHEVKDIKRDGAKWRVTVKNVHTGDTQVIRANFVFVGAGGMALPLLQKTGIVEIRGWGGFPVSGQWLRCTNPDIIEQHAAKVYGKASIGAPPMSVPHLDTRVIDGEKGLLFGPYAGWTPKFLKKGSYLDLFKSIRPTNLMSYLGVGAQEFGLTKYLITEVMKDQAARMESLREYMPNAKDEDWELVTAGQRVQAIQPVVGPRFSTLAFGTSLINSADGSVAGILGASPGASIAPAAMLELLERCFGQKMVEWGPTIKDMIPSYGIRLATDQKLFNEIWDHTQATLQLDKK</sequence>
<gene>
    <name evidence="1" type="primary">mqo</name>
    <name type="ordered locus">DIP1492</name>
</gene>
<dbReference type="EC" id="1.1.5.4" evidence="1"/>
<dbReference type="EMBL" id="BX248358">
    <property type="protein sequence ID" value="CAE50019.1"/>
    <property type="molecule type" value="Genomic_DNA"/>
</dbReference>
<dbReference type="RefSeq" id="WP_010935102.1">
    <property type="nucleotide sequence ID" value="NC_002935.2"/>
</dbReference>
<dbReference type="SMR" id="Q6NGL9"/>
<dbReference type="STRING" id="257309.DIP1492"/>
<dbReference type="DNASU" id="2650376"/>
<dbReference type="KEGG" id="cdi:DIP1492"/>
<dbReference type="HOGENOM" id="CLU_028151_0_0_11"/>
<dbReference type="UniPathway" id="UPA00223">
    <property type="reaction ID" value="UER01008"/>
</dbReference>
<dbReference type="Proteomes" id="UP000002198">
    <property type="component" value="Chromosome"/>
</dbReference>
<dbReference type="GO" id="GO:0047545">
    <property type="term" value="F:2-hydroxyglutarate dehydrogenase activity"/>
    <property type="evidence" value="ECO:0007669"/>
    <property type="project" value="TreeGrafter"/>
</dbReference>
<dbReference type="GO" id="GO:0008924">
    <property type="term" value="F:L-malate dehydrogenase (quinone) activity"/>
    <property type="evidence" value="ECO:0007669"/>
    <property type="project" value="UniProtKB-UniRule"/>
</dbReference>
<dbReference type="GO" id="GO:0006099">
    <property type="term" value="P:tricarboxylic acid cycle"/>
    <property type="evidence" value="ECO:0007669"/>
    <property type="project" value="UniProtKB-UniRule"/>
</dbReference>
<dbReference type="Gene3D" id="3.30.9.10">
    <property type="entry name" value="D-Amino Acid Oxidase, subunit A, domain 2"/>
    <property type="match status" value="1"/>
</dbReference>
<dbReference type="Gene3D" id="3.50.50.60">
    <property type="entry name" value="FAD/NAD(P)-binding domain"/>
    <property type="match status" value="1"/>
</dbReference>
<dbReference type="HAMAP" id="MF_00212">
    <property type="entry name" value="MQO"/>
    <property type="match status" value="1"/>
</dbReference>
<dbReference type="InterPro" id="IPR036188">
    <property type="entry name" value="FAD/NAD-bd_sf"/>
</dbReference>
<dbReference type="InterPro" id="IPR006231">
    <property type="entry name" value="MQO"/>
</dbReference>
<dbReference type="NCBIfam" id="TIGR01320">
    <property type="entry name" value="mal_quin_oxido"/>
    <property type="match status" value="1"/>
</dbReference>
<dbReference type="NCBIfam" id="NF003606">
    <property type="entry name" value="PRK05257.2-1"/>
    <property type="match status" value="1"/>
</dbReference>
<dbReference type="NCBIfam" id="NF003611">
    <property type="entry name" value="PRK05257.3-2"/>
    <property type="match status" value="1"/>
</dbReference>
<dbReference type="NCBIfam" id="NF009875">
    <property type="entry name" value="PRK13339.1"/>
    <property type="match status" value="1"/>
</dbReference>
<dbReference type="PANTHER" id="PTHR43104">
    <property type="entry name" value="L-2-HYDROXYGLUTARATE DEHYDROGENASE, MITOCHONDRIAL"/>
    <property type="match status" value="1"/>
</dbReference>
<dbReference type="PANTHER" id="PTHR43104:SF2">
    <property type="entry name" value="L-2-HYDROXYGLUTARATE DEHYDROGENASE, MITOCHONDRIAL"/>
    <property type="match status" value="1"/>
</dbReference>
<dbReference type="Pfam" id="PF06039">
    <property type="entry name" value="Mqo"/>
    <property type="match status" value="1"/>
</dbReference>
<dbReference type="SUPFAM" id="SSF51905">
    <property type="entry name" value="FAD/NAD(P)-binding domain"/>
    <property type="match status" value="1"/>
</dbReference>